<comment type="function">
    <text evidence="1">Catalyzes the biosynthesis of agmatine from arginine.</text>
</comment>
<comment type="catalytic activity">
    <reaction evidence="1">
        <text>L-arginine + H(+) = agmatine + CO2</text>
        <dbReference type="Rhea" id="RHEA:17641"/>
        <dbReference type="ChEBI" id="CHEBI:15378"/>
        <dbReference type="ChEBI" id="CHEBI:16526"/>
        <dbReference type="ChEBI" id="CHEBI:32682"/>
        <dbReference type="ChEBI" id="CHEBI:58145"/>
        <dbReference type="EC" id="4.1.1.19"/>
    </reaction>
</comment>
<comment type="cofactor">
    <cofactor evidence="1">
        <name>Mg(2+)</name>
        <dbReference type="ChEBI" id="CHEBI:18420"/>
    </cofactor>
</comment>
<comment type="cofactor">
    <cofactor evidence="1">
        <name>pyridoxal 5'-phosphate</name>
        <dbReference type="ChEBI" id="CHEBI:597326"/>
    </cofactor>
</comment>
<comment type="similarity">
    <text evidence="1">Belongs to the Orn/Lys/Arg decarboxylase class-II family. SpeA subfamily.</text>
</comment>
<protein>
    <recommendedName>
        <fullName evidence="1">Biosynthetic arginine decarboxylase</fullName>
        <shortName evidence="1">ADC</shortName>
        <ecNumber evidence="1">4.1.1.19</ecNumber>
    </recommendedName>
</protein>
<accession>Q8DHY6</accession>
<name>SPEA_THEVB</name>
<organism>
    <name type="scientific">Thermosynechococcus vestitus (strain NIES-2133 / IAM M-273 / BP-1)</name>
    <dbReference type="NCBI Taxonomy" id="197221"/>
    <lineage>
        <taxon>Bacteria</taxon>
        <taxon>Bacillati</taxon>
        <taxon>Cyanobacteriota</taxon>
        <taxon>Cyanophyceae</taxon>
        <taxon>Acaryochloridales</taxon>
        <taxon>Thermosynechococcaceae</taxon>
        <taxon>Thermosynechococcus</taxon>
    </lineage>
</organism>
<keyword id="KW-0210">Decarboxylase</keyword>
<keyword id="KW-0456">Lyase</keyword>
<keyword id="KW-0460">Magnesium</keyword>
<keyword id="KW-0479">Metal-binding</keyword>
<keyword id="KW-0620">Polyamine biosynthesis</keyword>
<keyword id="KW-0663">Pyridoxal phosphate</keyword>
<keyword id="KW-1185">Reference proteome</keyword>
<keyword id="KW-0745">Spermidine biosynthesis</keyword>
<reference key="1">
    <citation type="journal article" date="2002" name="DNA Res.">
        <title>Complete genome structure of the thermophilic cyanobacterium Thermosynechococcus elongatus BP-1.</title>
        <authorList>
            <person name="Nakamura Y."/>
            <person name="Kaneko T."/>
            <person name="Sato S."/>
            <person name="Ikeuchi M."/>
            <person name="Katoh H."/>
            <person name="Sasamoto S."/>
            <person name="Watanabe A."/>
            <person name="Iriguchi M."/>
            <person name="Kawashima K."/>
            <person name="Kimura T."/>
            <person name="Kishida Y."/>
            <person name="Kiyokawa C."/>
            <person name="Kohara M."/>
            <person name="Matsumoto M."/>
            <person name="Matsuno A."/>
            <person name="Nakazaki N."/>
            <person name="Shimpo S."/>
            <person name="Sugimoto M."/>
            <person name="Takeuchi C."/>
            <person name="Yamada M."/>
            <person name="Tabata S."/>
        </authorList>
    </citation>
    <scope>NUCLEOTIDE SEQUENCE [LARGE SCALE GENOMIC DNA]</scope>
    <source>
        <strain>NIES-2133 / IAM M-273 / BP-1</strain>
    </source>
</reference>
<dbReference type="EC" id="4.1.1.19" evidence="1"/>
<dbReference type="EMBL" id="BA000039">
    <property type="protein sequence ID" value="BAC09359.1"/>
    <property type="molecule type" value="Genomic_DNA"/>
</dbReference>
<dbReference type="RefSeq" id="NP_682597.1">
    <property type="nucleotide sequence ID" value="NC_004113.1"/>
</dbReference>
<dbReference type="RefSeq" id="WP_011057644.1">
    <property type="nucleotide sequence ID" value="NC_004113.1"/>
</dbReference>
<dbReference type="SMR" id="Q8DHY6"/>
<dbReference type="STRING" id="197221.gene:10748412"/>
<dbReference type="EnsemblBacteria" id="BAC09359">
    <property type="protein sequence ID" value="BAC09359"/>
    <property type="gene ID" value="BAC09359"/>
</dbReference>
<dbReference type="KEGG" id="tel:tll1807"/>
<dbReference type="PATRIC" id="fig|197221.4.peg.1889"/>
<dbReference type="eggNOG" id="COG1166">
    <property type="taxonomic scope" value="Bacteria"/>
</dbReference>
<dbReference type="Proteomes" id="UP000000440">
    <property type="component" value="Chromosome"/>
</dbReference>
<dbReference type="GO" id="GO:0008792">
    <property type="term" value="F:arginine decarboxylase activity"/>
    <property type="evidence" value="ECO:0007669"/>
    <property type="project" value="UniProtKB-UniRule"/>
</dbReference>
<dbReference type="GO" id="GO:0046872">
    <property type="term" value="F:metal ion binding"/>
    <property type="evidence" value="ECO:0007669"/>
    <property type="project" value="UniProtKB-KW"/>
</dbReference>
<dbReference type="GO" id="GO:0006527">
    <property type="term" value="P:arginine catabolic process"/>
    <property type="evidence" value="ECO:0007669"/>
    <property type="project" value="InterPro"/>
</dbReference>
<dbReference type="GO" id="GO:0008295">
    <property type="term" value="P:spermidine biosynthetic process"/>
    <property type="evidence" value="ECO:0007669"/>
    <property type="project" value="UniProtKB-UniRule"/>
</dbReference>
<dbReference type="CDD" id="cd06830">
    <property type="entry name" value="PLPDE_III_ADC"/>
    <property type="match status" value="1"/>
</dbReference>
<dbReference type="FunFam" id="1.20.58.930:FF:000002">
    <property type="entry name" value="Biosynthetic arginine decarboxylase"/>
    <property type="match status" value="1"/>
</dbReference>
<dbReference type="FunFam" id="3.20.20.10:FF:000001">
    <property type="entry name" value="Biosynthetic arginine decarboxylase"/>
    <property type="match status" value="1"/>
</dbReference>
<dbReference type="Gene3D" id="1.10.287.3440">
    <property type="match status" value="1"/>
</dbReference>
<dbReference type="Gene3D" id="1.20.58.930">
    <property type="match status" value="1"/>
</dbReference>
<dbReference type="Gene3D" id="3.20.20.10">
    <property type="entry name" value="Alanine racemase"/>
    <property type="match status" value="1"/>
</dbReference>
<dbReference type="Gene3D" id="2.40.37.10">
    <property type="entry name" value="Lyase, Ornithine Decarboxylase, Chain A, domain 1"/>
    <property type="match status" value="1"/>
</dbReference>
<dbReference type="HAMAP" id="MF_01417">
    <property type="entry name" value="SpeA"/>
    <property type="match status" value="1"/>
</dbReference>
<dbReference type="InterPro" id="IPR009006">
    <property type="entry name" value="Ala_racemase/Decarboxylase_C"/>
</dbReference>
<dbReference type="InterPro" id="IPR040634">
    <property type="entry name" value="Arg_decarb_HB"/>
</dbReference>
<dbReference type="InterPro" id="IPR041128">
    <property type="entry name" value="Arg_decarbox_C"/>
</dbReference>
<dbReference type="InterPro" id="IPR002985">
    <property type="entry name" value="Arg_decrbxlase"/>
</dbReference>
<dbReference type="InterPro" id="IPR022657">
    <property type="entry name" value="De-COase2_CS"/>
</dbReference>
<dbReference type="InterPro" id="IPR022644">
    <property type="entry name" value="De-COase2_N"/>
</dbReference>
<dbReference type="InterPro" id="IPR022653">
    <property type="entry name" value="De-COase2_pyr-phos_BS"/>
</dbReference>
<dbReference type="InterPro" id="IPR000183">
    <property type="entry name" value="Orn/DAP/Arg_de-COase"/>
</dbReference>
<dbReference type="InterPro" id="IPR029066">
    <property type="entry name" value="PLP-binding_barrel"/>
</dbReference>
<dbReference type="NCBIfam" id="NF003763">
    <property type="entry name" value="PRK05354.1"/>
    <property type="match status" value="1"/>
</dbReference>
<dbReference type="NCBIfam" id="TIGR01273">
    <property type="entry name" value="speA"/>
    <property type="match status" value="1"/>
</dbReference>
<dbReference type="PANTHER" id="PTHR43295">
    <property type="entry name" value="ARGININE DECARBOXYLASE"/>
    <property type="match status" value="1"/>
</dbReference>
<dbReference type="PANTHER" id="PTHR43295:SF9">
    <property type="entry name" value="BIOSYNTHETIC ARGININE DECARBOXYLASE"/>
    <property type="match status" value="1"/>
</dbReference>
<dbReference type="Pfam" id="PF17810">
    <property type="entry name" value="Arg_decarb_HB"/>
    <property type="match status" value="1"/>
</dbReference>
<dbReference type="Pfam" id="PF17944">
    <property type="entry name" value="Arg_decarbox_C"/>
    <property type="match status" value="1"/>
</dbReference>
<dbReference type="Pfam" id="PF02784">
    <property type="entry name" value="Orn_Arg_deC_N"/>
    <property type="match status" value="1"/>
</dbReference>
<dbReference type="PIRSF" id="PIRSF001336">
    <property type="entry name" value="Arg_decrbxlase"/>
    <property type="match status" value="1"/>
</dbReference>
<dbReference type="PRINTS" id="PR01180">
    <property type="entry name" value="ARGDCRBXLASE"/>
</dbReference>
<dbReference type="PRINTS" id="PR01179">
    <property type="entry name" value="ODADCRBXLASE"/>
</dbReference>
<dbReference type="SUPFAM" id="SSF50621">
    <property type="entry name" value="Alanine racemase C-terminal domain-like"/>
    <property type="match status" value="1"/>
</dbReference>
<dbReference type="SUPFAM" id="SSF51419">
    <property type="entry name" value="PLP-binding barrel"/>
    <property type="match status" value="1"/>
</dbReference>
<dbReference type="PROSITE" id="PS00878">
    <property type="entry name" value="ODR_DC_2_1"/>
    <property type="match status" value="1"/>
</dbReference>
<dbReference type="PROSITE" id="PS00879">
    <property type="entry name" value="ODR_DC_2_2"/>
    <property type="match status" value="1"/>
</dbReference>
<feature type="chain" id="PRO_0000149979" description="Biosynthetic arginine decarboxylase">
    <location>
        <begin position="1"/>
        <end position="637"/>
    </location>
</feature>
<feature type="binding site" evidence="1">
    <location>
        <begin position="289"/>
        <end position="299"/>
    </location>
    <ligand>
        <name>substrate</name>
    </ligand>
</feature>
<feature type="modified residue" description="N6-(pyridoxal phosphate)lysine" evidence="1">
    <location>
        <position position="107"/>
    </location>
</feature>
<sequence>MALTVTKTSNWTIEDSEQLYRIQGWGEPYFGINAAGHVTVSPKGDRGGSLDLYELVQALQQRNISLPLLLRFSDILEDRIERLNACFARAIARYGYQGAYKGVFPIKCNQQRHIIEALVRFGQSHQFGLEAGSKPELLIALAMLNTPGALLICNGYKDRSYIETAILARRLGHTSIIVLEQPEEVAEVIAVSQALGIEPIVGVRAKLSTQGVGRWGTSAGDRAKFGLTVPEILTAVEQLRAAGMLNALQLLHFHIGSQISAISVIKDAIREAGQIYGELVRLGANMQYLDVGGGLGVDYDGSKTNFHASKNYSMQNYASDVVAGIKDACRQRGIPDPTLISESGRAIASHQSVLIFNVLGVSEVPKITPEPATAEEHLIIRNLYDTYQAIDENNYQEAYNDALQFKGEAISLFNFGYLSLPERARAESLFWACCAKILGIARQQEYVPDDLEDLEKIMASIYYINLSVFQSVPDSWAIDQLFPIMPIHRLDEEPTERGILADLTCDSDGKIDQFIDLRDVKSVLELHPFRPGEPYYLGLFLNGAYQEIMGNLHNLFGDTNAVHIRLTPKGYEIEHLVRGDTMQEVLGYVQYQGDALLEKIRCRTEAALAEEQITLAEAQHLLENYERSLRSYTYLSS</sequence>
<gene>
    <name evidence="1" type="primary">speA</name>
    <name type="ordered locus">tll1807</name>
</gene>
<proteinExistence type="inferred from homology"/>
<evidence type="ECO:0000255" key="1">
    <source>
        <dbReference type="HAMAP-Rule" id="MF_01417"/>
    </source>
</evidence>